<protein>
    <recommendedName>
        <fullName evidence="1">5-oxoprolinase subunit A</fullName>
        <shortName evidence="1">5-OPase subunit A</shortName>
        <ecNumber evidence="1">3.5.2.9</ecNumber>
    </recommendedName>
    <alternativeName>
        <fullName evidence="1">5-oxoprolinase (ATP-hydrolyzing) subunit A</fullName>
    </alternativeName>
</protein>
<name>PXPA_STAA8</name>
<gene>
    <name evidence="1" type="primary">pxpA</name>
    <name type="ordered locus">SAOUHSC_01708</name>
</gene>
<evidence type="ECO:0000255" key="1">
    <source>
        <dbReference type="HAMAP-Rule" id="MF_00691"/>
    </source>
</evidence>
<accession>Q2FXX2</accession>
<sequence>MRVDLNCDLGEAFGNYSFGGDHQIIPLITSANVACGFHAGDENVMNETVKLAKAHNVAVGAHPGLPDLKGFGRRNIDISNDEIYNLMIYQLGALQGFCRIHQVKINHVKPHGALYQMGAKDREIANVIAQAVYDFDPSLVLVGLANSYLISEAKNVGLITASEVFADRRYEDDGQLVSRKESDAVITDTDEALKQVLKMVKENKVISKNNKEVTLQADTICVHGDGEHALLFVSKIREILMKEGIDIQSL</sequence>
<proteinExistence type="inferred from homology"/>
<reference key="1">
    <citation type="book" date="2006" name="Gram positive pathogens, 2nd edition">
        <title>The Staphylococcus aureus NCTC 8325 genome.</title>
        <editorList>
            <person name="Fischetti V."/>
            <person name="Novick R."/>
            <person name="Ferretti J."/>
            <person name="Portnoy D."/>
            <person name="Rood J."/>
        </editorList>
        <authorList>
            <person name="Gillaspy A.F."/>
            <person name="Worrell V."/>
            <person name="Orvis J."/>
            <person name="Roe B.A."/>
            <person name="Dyer D.W."/>
            <person name="Iandolo J.J."/>
        </authorList>
    </citation>
    <scope>NUCLEOTIDE SEQUENCE [LARGE SCALE GENOMIC DNA]</scope>
    <source>
        <strain>NCTC 8325 / PS 47</strain>
    </source>
</reference>
<comment type="function">
    <text evidence="1">Catalyzes the cleavage of 5-oxoproline to form L-glutamate coupled to the hydrolysis of ATP to ADP and inorganic phosphate.</text>
</comment>
<comment type="catalytic activity">
    <reaction evidence="1">
        <text>5-oxo-L-proline + ATP + 2 H2O = L-glutamate + ADP + phosphate + H(+)</text>
        <dbReference type="Rhea" id="RHEA:10348"/>
        <dbReference type="ChEBI" id="CHEBI:15377"/>
        <dbReference type="ChEBI" id="CHEBI:15378"/>
        <dbReference type="ChEBI" id="CHEBI:29985"/>
        <dbReference type="ChEBI" id="CHEBI:30616"/>
        <dbReference type="ChEBI" id="CHEBI:43474"/>
        <dbReference type="ChEBI" id="CHEBI:58402"/>
        <dbReference type="ChEBI" id="CHEBI:456216"/>
        <dbReference type="EC" id="3.5.2.9"/>
    </reaction>
</comment>
<comment type="subunit">
    <text evidence="1">Forms a complex composed of PxpA, PxpB and PxpC.</text>
</comment>
<comment type="similarity">
    <text evidence="1">Belongs to the LamB/PxpA family.</text>
</comment>
<dbReference type="EC" id="3.5.2.9" evidence="1"/>
<dbReference type="EMBL" id="CP000253">
    <property type="protein sequence ID" value="ABD30782.1"/>
    <property type="molecule type" value="Genomic_DNA"/>
</dbReference>
<dbReference type="RefSeq" id="WP_001261795.1">
    <property type="nucleotide sequence ID" value="NZ_LS483365.1"/>
</dbReference>
<dbReference type="RefSeq" id="YP_500218.1">
    <property type="nucleotide sequence ID" value="NC_007795.1"/>
</dbReference>
<dbReference type="SMR" id="Q2FXX2"/>
<dbReference type="STRING" id="93061.SAOUHSC_01708"/>
<dbReference type="PaxDb" id="1280-SAXN108_1633"/>
<dbReference type="GeneID" id="3921098"/>
<dbReference type="KEGG" id="sao:SAOUHSC_01708"/>
<dbReference type="PATRIC" id="fig|93061.5.peg.1557"/>
<dbReference type="eggNOG" id="COG1540">
    <property type="taxonomic scope" value="Bacteria"/>
</dbReference>
<dbReference type="HOGENOM" id="CLU_069535_0_0_9"/>
<dbReference type="OrthoDB" id="9773478at2"/>
<dbReference type="PRO" id="PR:Q2FXX2"/>
<dbReference type="Proteomes" id="UP000008816">
    <property type="component" value="Chromosome"/>
</dbReference>
<dbReference type="GO" id="GO:0017168">
    <property type="term" value="F:5-oxoprolinase (ATP-hydrolyzing) activity"/>
    <property type="evidence" value="ECO:0007669"/>
    <property type="project" value="UniProtKB-UniRule"/>
</dbReference>
<dbReference type="GO" id="GO:0005524">
    <property type="term" value="F:ATP binding"/>
    <property type="evidence" value="ECO:0007669"/>
    <property type="project" value="UniProtKB-UniRule"/>
</dbReference>
<dbReference type="GO" id="GO:0005975">
    <property type="term" value="P:carbohydrate metabolic process"/>
    <property type="evidence" value="ECO:0007669"/>
    <property type="project" value="InterPro"/>
</dbReference>
<dbReference type="CDD" id="cd10787">
    <property type="entry name" value="LamB_YcsF_like"/>
    <property type="match status" value="1"/>
</dbReference>
<dbReference type="Gene3D" id="3.20.20.370">
    <property type="entry name" value="Glycoside hydrolase/deacetylase"/>
    <property type="match status" value="1"/>
</dbReference>
<dbReference type="HAMAP" id="MF_00691">
    <property type="entry name" value="PxpA"/>
    <property type="match status" value="1"/>
</dbReference>
<dbReference type="InterPro" id="IPR011330">
    <property type="entry name" value="Glyco_hydro/deAcase_b/a-brl"/>
</dbReference>
<dbReference type="InterPro" id="IPR005501">
    <property type="entry name" value="LamB/YcsF/PxpA-like"/>
</dbReference>
<dbReference type="NCBIfam" id="NF003813">
    <property type="entry name" value="PRK05406.1-2"/>
    <property type="match status" value="1"/>
</dbReference>
<dbReference type="NCBIfam" id="NF003814">
    <property type="entry name" value="PRK05406.1-3"/>
    <property type="match status" value="1"/>
</dbReference>
<dbReference type="NCBIfam" id="NF003816">
    <property type="entry name" value="PRK05406.1-5"/>
    <property type="match status" value="1"/>
</dbReference>
<dbReference type="PANTHER" id="PTHR30292:SF0">
    <property type="entry name" value="5-OXOPROLINASE SUBUNIT A"/>
    <property type="match status" value="1"/>
</dbReference>
<dbReference type="PANTHER" id="PTHR30292">
    <property type="entry name" value="UNCHARACTERIZED PROTEIN YBGL-RELATED"/>
    <property type="match status" value="1"/>
</dbReference>
<dbReference type="Pfam" id="PF03746">
    <property type="entry name" value="LamB_YcsF"/>
    <property type="match status" value="1"/>
</dbReference>
<dbReference type="SUPFAM" id="SSF88713">
    <property type="entry name" value="Glycoside hydrolase/deacetylase"/>
    <property type="match status" value="1"/>
</dbReference>
<organism>
    <name type="scientific">Staphylococcus aureus (strain NCTC 8325 / PS 47)</name>
    <dbReference type="NCBI Taxonomy" id="93061"/>
    <lineage>
        <taxon>Bacteria</taxon>
        <taxon>Bacillati</taxon>
        <taxon>Bacillota</taxon>
        <taxon>Bacilli</taxon>
        <taxon>Bacillales</taxon>
        <taxon>Staphylococcaceae</taxon>
        <taxon>Staphylococcus</taxon>
    </lineage>
</organism>
<feature type="chain" id="PRO_1000045227" description="5-oxoprolinase subunit A">
    <location>
        <begin position="1"/>
        <end position="250"/>
    </location>
</feature>
<keyword id="KW-0067">ATP-binding</keyword>
<keyword id="KW-0378">Hydrolase</keyword>
<keyword id="KW-0547">Nucleotide-binding</keyword>
<keyword id="KW-1185">Reference proteome</keyword>